<organism>
    <name type="scientific">Synechococcus elongatus (strain ATCC 33912 / PCC 7942 / FACHB-805)</name>
    <name type="common">Anacystis nidulans R2</name>
    <dbReference type="NCBI Taxonomy" id="1140"/>
    <lineage>
        <taxon>Bacteria</taxon>
        <taxon>Bacillati</taxon>
        <taxon>Cyanobacteriota</taxon>
        <taxon>Cyanophyceae</taxon>
        <taxon>Synechococcales</taxon>
        <taxon>Synechococcaceae</taxon>
        <taxon>Synechococcus</taxon>
    </lineage>
</organism>
<name>SYA_SYNE7</name>
<keyword id="KW-0030">Aminoacyl-tRNA synthetase</keyword>
<keyword id="KW-0067">ATP-binding</keyword>
<keyword id="KW-0963">Cytoplasm</keyword>
<keyword id="KW-0436">Ligase</keyword>
<keyword id="KW-0479">Metal-binding</keyword>
<keyword id="KW-0547">Nucleotide-binding</keyword>
<keyword id="KW-0648">Protein biosynthesis</keyword>
<keyword id="KW-1185">Reference proteome</keyword>
<keyword id="KW-0694">RNA-binding</keyword>
<keyword id="KW-0820">tRNA-binding</keyword>
<keyword id="KW-0862">Zinc</keyword>
<reference key="1">
    <citation type="submission" date="2005-08" db="EMBL/GenBank/DDBJ databases">
        <title>Complete sequence of chromosome 1 of Synechococcus elongatus PCC 7942.</title>
        <authorList>
            <consortium name="US DOE Joint Genome Institute"/>
            <person name="Copeland A."/>
            <person name="Lucas S."/>
            <person name="Lapidus A."/>
            <person name="Barry K."/>
            <person name="Detter J.C."/>
            <person name="Glavina T."/>
            <person name="Hammon N."/>
            <person name="Israni S."/>
            <person name="Pitluck S."/>
            <person name="Schmutz J."/>
            <person name="Larimer F."/>
            <person name="Land M."/>
            <person name="Kyrpides N."/>
            <person name="Lykidis A."/>
            <person name="Golden S."/>
            <person name="Richardson P."/>
        </authorList>
    </citation>
    <scope>NUCLEOTIDE SEQUENCE [LARGE SCALE GENOMIC DNA]</scope>
    <source>
        <strain>ATCC 33912 / PCC 7942 / FACHB-805</strain>
    </source>
</reference>
<sequence length="876" mass="94685">MAAPALSGDQIRETFLKFFEGKGHRRLPSASLIPEDPTVLLTIAGMLPFKPIFLGQQVAEVPRATTSQKCIRTNDIENVGRTARHHTFFEMLGNFSFGDYFKKEAIAFAWELVTEVFQVPAERLAVSVFEEDDEAFAIWRDQIGVPEARIQRLGAKDNFWASGPTGPCGPCSEIYYDFHPELGNDGLDLEDDSRFIEVYNLVFMQYNRDAAGNLTALEKQNIDTGMGLERMAQVLQGVPNNYETDLIFPIIQAVAAIAQRDYASESESVKVSLKVIGDHLRAVTHLIADGVTASNLGRGYVLRRLIRRVVRHGRLIGIDRPFTAEIAETAIALMAAQYPNLREREAAIKAELTREEQRFLETLERGEKLLAELLAAATDQIRGEDAFVLYDTYGFPLELTQEIAEEKGLTVDLAGFEAAMAAQRQRSQAAHETIDLTVQGSLDRLAEQIHPTEFVGYGDAVATAKVTALLREGQSVEAAEAGDRVQIVLDHTPFYAESGGQVGDRGVLTGESLIVRIEDVQKESGFFVHYGQIERGLLQVGDSVTAQIDRACRRRAQANHTATHLLQAALKLIVDEGISQAGSLVAFDRLRFDFNCPRAVTPEELRQIEDQINQWIAEAHGTVVEVMPIATAKAKGAVAMFGEKYGAEVRVIDVPGVSMELCGGTHVANTAEIGLFKIISEAGVASGVRRIEAVAGPAVLEYLNVRDAVVRDLSDRFKAKPEELSDRVTALQEELKANQKQLTALKAELAIAKSDALVSQAIPVGDAQVLVETLTGVDAAALQTAAERLQQKLGDAGAVVLGSSPEEGKVTLVAAFGPAIIAKGLKAGQFIGGIAKICGGGGGGRPNLAQAGGRDASKLPEAIAAALDQLKTAIAS</sequence>
<dbReference type="EC" id="6.1.1.7" evidence="1"/>
<dbReference type="EMBL" id="CP000100">
    <property type="protein sequence ID" value="ABB56906.1"/>
    <property type="status" value="ALT_INIT"/>
    <property type="molecule type" value="Genomic_DNA"/>
</dbReference>
<dbReference type="RefSeq" id="WP_039755798.1">
    <property type="nucleotide sequence ID" value="NZ_JACJTX010000005.1"/>
</dbReference>
<dbReference type="SMR" id="Q31PW3"/>
<dbReference type="STRING" id="1140.Synpcc7942_0876"/>
<dbReference type="PaxDb" id="1140-Synpcc7942_0876"/>
<dbReference type="GeneID" id="72429724"/>
<dbReference type="KEGG" id="syf:Synpcc7942_0876"/>
<dbReference type="eggNOG" id="COG0013">
    <property type="taxonomic scope" value="Bacteria"/>
</dbReference>
<dbReference type="HOGENOM" id="CLU_004485_1_1_3"/>
<dbReference type="OrthoDB" id="9803884at2"/>
<dbReference type="BioCyc" id="SYNEL:SYNPCC7942_0876-MONOMER"/>
<dbReference type="Proteomes" id="UP000889800">
    <property type="component" value="Chromosome"/>
</dbReference>
<dbReference type="GO" id="GO:0005829">
    <property type="term" value="C:cytosol"/>
    <property type="evidence" value="ECO:0007669"/>
    <property type="project" value="TreeGrafter"/>
</dbReference>
<dbReference type="GO" id="GO:0004813">
    <property type="term" value="F:alanine-tRNA ligase activity"/>
    <property type="evidence" value="ECO:0007669"/>
    <property type="project" value="UniProtKB-UniRule"/>
</dbReference>
<dbReference type="GO" id="GO:0002161">
    <property type="term" value="F:aminoacyl-tRNA deacylase activity"/>
    <property type="evidence" value="ECO:0007669"/>
    <property type="project" value="TreeGrafter"/>
</dbReference>
<dbReference type="GO" id="GO:0005524">
    <property type="term" value="F:ATP binding"/>
    <property type="evidence" value="ECO:0007669"/>
    <property type="project" value="UniProtKB-UniRule"/>
</dbReference>
<dbReference type="GO" id="GO:0000049">
    <property type="term" value="F:tRNA binding"/>
    <property type="evidence" value="ECO:0007669"/>
    <property type="project" value="UniProtKB-KW"/>
</dbReference>
<dbReference type="GO" id="GO:0008270">
    <property type="term" value="F:zinc ion binding"/>
    <property type="evidence" value="ECO:0007669"/>
    <property type="project" value="UniProtKB-UniRule"/>
</dbReference>
<dbReference type="GO" id="GO:0006419">
    <property type="term" value="P:alanyl-tRNA aminoacylation"/>
    <property type="evidence" value="ECO:0007669"/>
    <property type="project" value="UniProtKB-UniRule"/>
</dbReference>
<dbReference type="CDD" id="cd00673">
    <property type="entry name" value="AlaRS_core"/>
    <property type="match status" value="1"/>
</dbReference>
<dbReference type="FunFam" id="2.40.30.130:FF:000001">
    <property type="entry name" value="Alanine--tRNA ligase"/>
    <property type="match status" value="1"/>
</dbReference>
<dbReference type="FunFam" id="3.10.310.40:FF:000001">
    <property type="entry name" value="Alanine--tRNA ligase"/>
    <property type="match status" value="1"/>
</dbReference>
<dbReference type="FunFam" id="3.30.54.20:FF:000001">
    <property type="entry name" value="Alanine--tRNA ligase"/>
    <property type="match status" value="1"/>
</dbReference>
<dbReference type="FunFam" id="3.30.930.10:FF:000004">
    <property type="entry name" value="Alanine--tRNA ligase"/>
    <property type="match status" value="1"/>
</dbReference>
<dbReference type="FunFam" id="3.30.980.10:FF:000004">
    <property type="entry name" value="Alanine--tRNA ligase, cytoplasmic"/>
    <property type="match status" value="1"/>
</dbReference>
<dbReference type="Gene3D" id="2.40.30.130">
    <property type="match status" value="1"/>
</dbReference>
<dbReference type="Gene3D" id="3.10.310.40">
    <property type="match status" value="1"/>
</dbReference>
<dbReference type="Gene3D" id="3.30.54.20">
    <property type="match status" value="1"/>
</dbReference>
<dbReference type="Gene3D" id="6.10.250.550">
    <property type="match status" value="1"/>
</dbReference>
<dbReference type="Gene3D" id="3.30.930.10">
    <property type="entry name" value="Bira Bifunctional Protein, Domain 2"/>
    <property type="match status" value="1"/>
</dbReference>
<dbReference type="Gene3D" id="3.30.980.10">
    <property type="entry name" value="Threonyl-trna Synthetase, Chain A, domain 2"/>
    <property type="match status" value="1"/>
</dbReference>
<dbReference type="HAMAP" id="MF_00036_B">
    <property type="entry name" value="Ala_tRNA_synth_B"/>
    <property type="match status" value="1"/>
</dbReference>
<dbReference type="InterPro" id="IPR045864">
    <property type="entry name" value="aa-tRNA-synth_II/BPL/LPL"/>
</dbReference>
<dbReference type="InterPro" id="IPR002318">
    <property type="entry name" value="Ala-tRNA-lgiase_IIc"/>
</dbReference>
<dbReference type="InterPro" id="IPR018162">
    <property type="entry name" value="Ala-tRNA-ligase_IIc_anticod-bd"/>
</dbReference>
<dbReference type="InterPro" id="IPR018165">
    <property type="entry name" value="Ala-tRNA-synth_IIc_core"/>
</dbReference>
<dbReference type="InterPro" id="IPR018164">
    <property type="entry name" value="Ala-tRNA-synth_IIc_N"/>
</dbReference>
<dbReference type="InterPro" id="IPR050058">
    <property type="entry name" value="Ala-tRNA_ligase"/>
</dbReference>
<dbReference type="InterPro" id="IPR023033">
    <property type="entry name" value="Ala_tRNA_ligase_euk/bac"/>
</dbReference>
<dbReference type="InterPro" id="IPR003156">
    <property type="entry name" value="DHHA1_dom"/>
</dbReference>
<dbReference type="InterPro" id="IPR018163">
    <property type="entry name" value="Thr/Ala-tRNA-synth_IIc_edit"/>
</dbReference>
<dbReference type="InterPro" id="IPR009000">
    <property type="entry name" value="Transl_B-barrel_sf"/>
</dbReference>
<dbReference type="InterPro" id="IPR012947">
    <property type="entry name" value="tRNA_SAD"/>
</dbReference>
<dbReference type="NCBIfam" id="TIGR00344">
    <property type="entry name" value="alaS"/>
    <property type="match status" value="1"/>
</dbReference>
<dbReference type="PANTHER" id="PTHR11777:SF9">
    <property type="entry name" value="ALANINE--TRNA LIGASE, CYTOPLASMIC"/>
    <property type="match status" value="1"/>
</dbReference>
<dbReference type="PANTHER" id="PTHR11777">
    <property type="entry name" value="ALANYL-TRNA SYNTHETASE"/>
    <property type="match status" value="1"/>
</dbReference>
<dbReference type="Pfam" id="PF02272">
    <property type="entry name" value="DHHA1"/>
    <property type="match status" value="1"/>
</dbReference>
<dbReference type="Pfam" id="PF01411">
    <property type="entry name" value="tRNA-synt_2c"/>
    <property type="match status" value="1"/>
</dbReference>
<dbReference type="Pfam" id="PF07973">
    <property type="entry name" value="tRNA_SAD"/>
    <property type="match status" value="1"/>
</dbReference>
<dbReference type="PRINTS" id="PR00980">
    <property type="entry name" value="TRNASYNTHALA"/>
</dbReference>
<dbReference type="SMART" id="SM00863">
    <property type="entry name" value="tRNA_SAD"/>
    <property type="match status" value="1"/>
</dbReference>
<dbReference type="SUPFAM" id="SSF55681">
    <property type="entry name" value="Class II aaRS and biotin synthetases"/>
    <property type="match status" value="1"/>
</dbReference>
<dbReference type="SUPFAM" id="SSF101353">
    <property type="entry name" value="Putative anticodon-binding domain of alanyl-tRNA synthetase (AlaRS)"/>
    <property type="match status" value="1"/>
</dbReference>
<dbReference type="SUPFAM" id="SSF55186">
    <property type="entry name" value="ThrRS/AlaRS common domain"/>
    <property type="match status" value="1"/>
</dbReference>
<dbReference type="SUPFAM" id="SSF50447">
    <property type="entry name" value="Translation proteins"/>
    <property type="match status" value="1"/>
</dbReference>
<dbReference type="PROSITE" id="PS50860">
    <property type="entry name" value="AA_TRNA_LIGASE_II_ALA"/>
    <property type="match status" value="1"/>
</dbReference>
<protein>
    <recommendedName>
        <fullName evidence="1">Alanine--tRNA ligase</fullName>
        <ecNumber evidence="1">6.1.1.7</ecNumber>
    </recommendedName>
    <alternativeName>
        <fullName evidence="1">Alanyl-tRNA synthetase</fullName>
        <shortName evidence="1">AlaRS</shortName>
    </alternativeName>
</protein>
<evidence type="ECO:0000255" key="1">
    <source>
        <dbReference type="HAMAP-Rule" id="MF_00036"/>
    </source>
</evidence>
<evidence type="ECO:0000305" key="2"/>
<accession>Q31PW3</accession>
<gene>
    <name evidence="1" type="primary">alaS</name>
    <name type="ordered locus">Synpcc7942_0876</name>
</gene>
<feature type="chain" id="PRO_0000347835" description="Alanine--tRNA ligase">
    <location>
        <begin position="1"/>
        <end position="876"/>
    </location>
</feature>
<feature type="binding site" evidence="1">
    <location>
        <position position="560"/>
    </location>
    <ligand>
        <name>Zn(2+)</name>
        <dbReference type="ChEBI" id="CHEBI:29105"/>
    </ligand>
</feature>
<feature type="binding site" evidence="1">
    <location>
        <position position="564"/>
    </location>
    <ligand>
        <name>Zn(2+)</name>
        <dbReference type="ChEBI" id="CHEBI:29105"/>
    </ligand>
</feature>
<feature type="binding site" evidence="1">
    <location>
        <position position="662"/>
    </location>
    <ligand>
        <name>Zn(2+)</name>
        <dbReference type="ChEBI" id="CHEBI:29105"/>
    </ligand>
</feature>
<feature type="binding site" evidence="1">
    <location>
        <position position="666"/>
    </location>
    <ligand>
        <name>Zn(2+)</name>
        <dbReference type="ChEBI" id="CHEBI:29105"/>
    </ligand>
</feature>
<comment type="function">
    <text evidence="1">Catalyzes the attachment of alanine to tRNA(Ala) in a two-step reaction: alanine is first activated by ATP to form Ala-AMP and then transferred to the acceptor end of tRNA(Ala). Also edits incorrectly charged Ser-tRNA(Ala) and Gly-tRNA(Ala) via its editing domain.</text>
</comment>
<comment type="catalytic activity">
    <reaction evidence="1">
        <text>tRNA(Ala) + L-alanine + ATP = L-alanyl-tRNA(Ala) + AMP + diphosphate</text>
        <dbReference type="Rhea" id="RHEA:12540"/>
        <dbReference type="Rhea" id="RHEA-COMP:9657"/>
        <dbReference type="Rhea" id="RHEA-COMP:9923"/>
        <dbReference type="ChEBI" id="CHEBI:30616"/>
        <dbReference type="ChEBI" id="CHEBI:33019"/>
        <dbReference type="ChEBI" id="CHEBI:57972"/>
        <dbReference type="ChEBI" id="CHEBI:78442"/>
        <dbReference type="ChEBI" id="CHEBI:78497"/>
        <dbReference type="ChEBI" id="CHEBI:456215"/>
        <dbReference type="EC" id="6.1.1.7"/>
    </reaction>
</comment>
<comment type="cofactor">
    <cofactor evidence="1">
        <name>Zn(2+)</name>
        <dbReference type="ChEBI" id="CHEBI:29105"/>
    </cofactor>
    <text evidence="1">Binds 1 zinc ion per subunit.</text>
</comment>
<comment type="subcellular location">
    <subcellularLocation>
        <location evidence="1">Cytoplasm</location>
    </subcellularLocation>
</comment>
<comment type="domain">
    <text evidence="1">Consists of three domains; the N-terminal catalytic domain, the editing domain and the C-terminal C-Ala domain. The editing domain removes incorrectly charged amino acids, while the C-Ala domain, along with tRNA(Ala), serves as a bridge to cooperatively bring together the editing and aminoacylation centers thus stimulating deacylation of misacylated tRNAs.</text>
</comment>
<comment type="similarity">
    <text evidence="1">Belongs to the class-II aminoacyl-tRNA synthetase family.</text>
</comment>
<comment type="sequence caution" evidence="2">
    <conflict type="erroneous initiation">
        <sequence resource="EMBL-CDS" id="ABB56906"/>
    </conflict>
</comment>
<proteinExistence type="inferred from homology"/>